<protein>
    <recommendedName>
        <fullName evidence="1">Ribosomal RNA small subunit methyltransferase I</fullName>
        <ecNumber evidence="1">2.1.1.198</ecNumber>
    </recommendedName>
    <alternativeName>
        <fullName evidence="1">16S rRNA 2'-O-ribose C1402 methyltransferase</fullName>
    </alternativeName>
    <alternativeName>
        <fullName evidence="1">rRNA (cytidine-2'-O-)-methyltransferase RsmI</fullName>
    </alternativeName>
</protein>
<accession>Q5XDL7</accession>
<comment type="function">
    <text evidence="1">Catalyzes the 2'-O-methylation of the ribose of cytidine 1402 (C1402) in 16S rRNA.</text>
</comment>
<comment type="catalytic activity">
    <reaction evidence="1">
        <text>cytidine(1402) in 16S rRNA + S-adenosyl-L-methionine = 2'-O-methylcytidine(1402) in 16S rRNA + S-adenosyl-L-homocysteine + H(+)</text>
        <dbReference type="Rhea" id="RHEA:42924"/>
        <dbReference type="Rhea" id="RHEA-COMP:10285"/>
        <dbReference type="Rhea" id="RHEA-COMP:10286"/>
        <dbReference type="ChEBI" id="CHEBI:15378"/>
        <dbReference type="ChEBI" id="CHEBI:57856"/>
        <dbReference type="ChEBI" id="CHEBI:59789"/>
        <dbReference type="ChEBI" id="CHEBI:74495"/>
        <dbReference type="ChEBI" id="CHEBI:82748"/>
        <dbReference type="EC" id="2.1.1.198"/>
    </reaction>
</comment>
<comment type="subcellular location">
    <subcellularLocation>
        <location evidence="1">Cytoplasm</location>
    </subcellularLocation>
</comment>
<comment type="similarity">
    <text evidence="1">Belongs to the methyltransferase superfamily. RsmI family.</text>
</comment>
<feature type="chain" id="PRO_0000211956" description="Ribosomal RNA small subunit methyltransferase I">
    <location>
        <begin position="1"/>
        <end position="287"/>
    </location>
</feature>
<name>RSMI_STRP6</name>
<evidence type="ECO:0000255" key="1">
    <source>
        <dbReference type="HAMAP-Rule" id="MF_01877"/>
    </source>
</evidence>
<gene>
    <name evidence="1" type="primary">rsmI</name>
    <name type="ordered locus">M6_Spy0361</name>
</gene>
<keyword id="KW-0963">Cytoplasm</keyword>
<keyword id="KW-0489">Methyltransferase</keyword>
<keyword id="KW-0698">rRNA processing</keyword>
<keyword id="KW-0949">S-adenosyl-L-methionine</keyword>
<keyword id="KW-0808">Transferase</keyword>
<reference key="1">
    <citation type="journal article" date="2004" name="J. Infect. Dis.">
        <title>Progress toward characterization of the group A Streptococcus metagenome: complete genome sequence of a macrolide-resistant serotype M6 strain.</title>
        <authorList>
            <person name="Banks D.J."/>
            <person name="Porcella S.F."/>
            <person name="Barbian K.D."/>
            <person name="Beres S.B."/>
            <person name="Philips L.E."/>
            <person name="Voyich J.M."/>
            <person name="DeLeo F.R."/>
            <person name="Martin J.M."/>
            <person name="Somerville G.A."/>
            <person name="Musser J.M."/>
        </authorList>
    </citation>
    <scope>NUCLEOTIDE SEQUENCE [LARGE SCALE GENOMIC DNA]</scope>
    <source>
        <strain>ATCC BAA-946 / MGAS10394</strain>
    </source>
</reference>
<dbReference type="EC" id="2.1.1.198" evidence="1"/>
<dbReference type="EMBL" id="CP000003">
    <property type="protein sequence ID" value="AAT86496.1"/>
    <property type="molecule type" value="Genomic_DNA"/>
</dbReference>
<dbReference type="RefSeq" id="WP_011184217.1">
    <property type="nucleotide sequence ID" value="NC_006086.1"/>
</dbReference>
<dbReference type="SMR" id="Q5XDL7"/>
<dbReference type="KEGG" id="spa:M6_Spy0361"/>
<dbReference type="HOGENOM" id="CLU_044779_1_0_9"/>
<dbReference type="Proteomes" id="UP000001167">
    <property type="component" value="Chromosome"/>
</dbReference>
<dbReference type="GO" id="GO:0005737">
    <property type="term" value="C:cytoplasm"/>
    <property type="evidence" value="ECO:0007669"/>
    <property type="project" value="UniProtKB-SubCell"/>
</dbReference>
<dbReference type="GO" id="GO:0070677">
    <property type="term" value="F:rRNA (cytosine-2'-O-)-methyltransferase activity"/>
    <property type="evidence" value="ECO:0007669"/>
    <property type="project" value="UniProtKB-UniRule"/>
</dbReference>
<dbReference type="CDD" id="cd11648">
    <property type="entry name" value="RsmI"/>
    <property type="match status" value="1"/>
</dbReference>
<dbReference type="FunFam" id="3.30.950.10:FF:000002">
    <property type="entry name" value="Ribosomal RNA small subunit methyltransferase I"/>
    <property type="match status" value="1"/>
</dbReference>
<dbReference type="FunFam" id="3.40.1010.10:FF:000002">
    <property type="entry name" value="Ribosomal RNA small subunit methyltransferase I"/>
    <property type="match status" value="1"/>
</dbReference>
<dbReference type="Gene3D" id="3.40.1010.10">
    <property type="entry name" value="Cobalt-precorrin-4 Transmethylase, Domain 1"/>
    <property type="match status" value="1"/>
</dbReference>
<dbReference type="Gene3D" id="3.30.950.10">
    <property type="entry name" value="Methyltransferase, Cobalt-precorrin-4 Transmethylase, Domain 2"/>
    <property type="match status" value="1"/>
</dbReference>
<dbReference type="HAMAP" id="MF_01877">
    <property type="entry name" value="16SrRNA_methyltr_I"/>
    <property type="match status" value="1"/>
</dbReference>
<dbReference type="InterPro" id="IPR000878">
    <property type="entry name" value="4pyrrol_Mease"/>
</dbReference>
<dbReference type="InterPro" id="IPR035996">
    <property type="entry name" value="4pyrrol_Methylase_sf"/>
</dbReference>
<dbReference type="InterPro" id="IPR014777">
    <property type="entry name" value="4pyrrole_Mease_sub1"/>
</dbReference>
<dbReference type="InterPro" id="IPR014776">
    <property type="entry name" value="4pyrrole_Mease_sub2"/>
</dbReference>
<dbReference type="InterPro" id="IPR008189">
    <property type="entry name" value="rRNA_ssu_MeTfrase_I"/>
</dbReference>
<dbReference type="InterPro" id="IPR018063">
    <property type="entry name" value="SAM_MeTrfase_RsmI_CS"/>
</dbReference>
<dbReference type="NCBIfam" id="TIGR00096">
    <property type="entry name" value="16S rRNA (cytidine(1402)-2'-O)-methyltransferase"/>
    <property type="match status" value="1"/>
</dbReference>
<dbReference type="PANTHER" id="PTHR46111">
    <property type="entry name" value="RIBOSOMAL RNA SMALL SUBUNIT METHYLTRANSFERASE I"/>
    <property type="match status" value="1"/>
</dbReference>
<dbReference type="PANTHER" id="PTHR46111:SF1">
    <property type="entry name" value="RIBOSOMAL RNA SMALL SUBUNIT METHYLTRANSFERASE I"/>
    <property type="match status" value="1"/>
</dbReference>
<dbReference type="Pfam" id="PF00590">
    <property type="entry name" value="TP_methylase"/>
    <property type="match status" value="1"/>
</dbReference>
<dbReference type="PIRSF" id="PIRSF005917">
    <property type="entry name" value="MTase_YraL"/>
    <property type="match status" value="1"/>
</dbReference>
<dbReference type="SUPFAM" id="SSF53790">
    <property type="entry name" value="Tetrapyrrole methylase"/>
    <property type="match status" value="1"/>
</dbReference>
<dbReference type="PROSITE" id="PS01296">
    <property type="entry name" value="RSMI"/>
    <property type="match status" value="1"/>
</dbReference>
<sequence length="287" mass="31820">MQVQKSFKDKKTSGTLYLVPTPIGNLQDMTFRAVATLKEVDFICAEDTRNTGLLLKHFDIATKQISFHEHNSYEKIPDLIDLLISGRSLAQVSDAGMPSISDPGHDLVKAAIDSDIAVVALPGASAGITALIASGLAPQPHVFYGFLPRKAGQQKAFFEDKHHYTETQMFCESPYRIKDTLTNMLACYGDRQVVLVRELTKLFEEYQRGSISEILSYLEETPLKGECLLIVAGAQVDSEIELTADVDLVSLVQKEIQAGAKPNQAIKTIAKAYQVNRQELYQQFHDL</sequence>
<proteinExistence type="inferred from homology"/>
<organism>
    <name type="scientific">Streptococcus pyogenes serotype M6 (strain ATCC BAA-946 / MGAS10394)</name>
    <dbReference type="NCBI Taxonomy" id="286636"/>
    <lineage>
        <taxon>Bacteria</taxon>
        <taxon>Bacillati</taxon>
        <taxon>Bacillota</taxon>
        <taxon>Bacilli</taxon>
        <taxon>Lactobacillales</taxon>
        <taxon>Streptococcaceae</taxon>
        <taxon>Streptococcus</taxon>
    </lineage>
</organism>